<comment type="function">
    <text evidence="1">Catalyzes the oxidative demethylation of N-methyl-L-tryptophan.</text>
</comment>
<comment type="catalytic activity">
    <reaction evidence="1">
        <text>N(alpha)-methyl-L-tryptophan + O2 + H2O = L-tryptophan + formaldehyde + H2O2</text>
        <dbReference type="Rhea" id="RHEA:28006"/>
        <dbReference type="ChEBI" id="CHEBI:15377"/>
        <dbReference type="ChEBI" id="CHEBI:15379"/>
        <dbReference type="ChEBI" id="CHEBI:16240"/>
        <dbReference type="ChEBI" id="CHEBI:16842"/>
        <dbReference type="ChEBI" id="CHEBI:57283"/>
        <dbReference type="ChEBI" id="CHEBI:57912"/>
    </reaction>
</comment>
<comment type="cofactor">
    <cofactor evidence="1">
        <name>FAD</name>
        <dbReference type="ChEBI" id="CHEBI:57692"/>
    </cofactor>
    <text evidence="1">Binds 1 FAD per subunit.</text>
</comment>
<comment type="subunit">
    <text evidence="1">Monomer.</text>
</comment>
<comment type="similarity">
    <text evidence="1">Belongs to the MSOX/MTOX family. MTOX subfamily.</text>
</comment>
<accession>B4TET2</accession>
<keyword id="KW-0274">FAD</keyword>
<keyword id="KW-0285">Flavoprotein</keyword>
<keyword id="KW-0560">Oxidoreductase</keyword>
<evidence type="ECO:0000255" key="1">
    <source>
        <dbReference type="HAMAP-Rule" id="MF_00515"/>
    </source>
</evidence>
<name>MTOX_SALHS</name>
<gene>
    <name evidence="1" type="primary">solA</name>
    <name type="ordered locus">SeHA_C1272</name>
</gene>
<proteinExistence type="inferred from homology"/>
<reference key="1">
    <citation type="journal article" date="2011" name="J. Bacteriol.">
        <title>Comparative genomics of 28 Salmonella enterica isolates: evidence for CRISPR-mediated adaptive sublineage evolution.</title>
        <authorList>
            <person name="Fricke W.F."/>
            <person name="Mammel M.K."/>
            <person name="McDermott P.F."/>
            <person name="Tartera C."/>
            <person name="White D.G."/>
            <person name="Leclerc J.E."/>
            <person name="Ravel J."/>
            <person name="Cebula T.A."/>
        </authorList>
    </citation>
    <scope>NUCLEOTIDE SEQUENCE [LARGE SCALE GENOMIC DNA]</scope>
    <source>
        <strain>SL476</strain>
    </source>
</reference>
<organism>
    <name type="scientific">Salmonella heidelberg (strain SL476)</name>
    <dbReference type="NCBI Taxonomy" id="454169"/>
    <lineage>
        <taxon>Bacteria</taxon>
        <taxon>Pseudomonadati</taxon>
        <taxon>Pseudomonadota</taxon>
        <taxon>Gammaproteobacteria</taxon>
        <taxon>Enterobacterales</taxon>
        <taxon>Enterobacteriaceae</taxon>
        <taxon>Salmonella</taxon>
    </lineage>
</organism>
<protein>
    <recommendedName>
        <fullName evidence="1">N-methyl-L-tryptophan oxidase</fullName>
        <shortName evidence="1">MTOX</shortName>
        <ecNumber evidence="1">1.5.3.-</ecNumber>
    </recommendedName>
</protein>
<dbReference type="EC" id="1.5.3.-" evidence="1"/>
<dbReference type="EMBL" id="CP001120">
    <property type="protein sequence ID" value="ACF68731.1"/>
    <property type="molecule type" value="Genomic_DNA"/>
</dbReference>
<dbReference type="RefSeq" id="WP_000872776.1">
    <property type="nucleotide sequence ID" value="NC_011083.1"/>
</dbReference>
<dbReference type="SMR" id="B4TET2"/>
<dbReference type="KEGG" id="seh:SeHA_C1272"/>
<dbReference type="HOGENOM" id="CLU_007884_2_1_6"/>
<dbReference type="Proteomes" id="UP000001866">
    <property type="component" value="Chromosome"/>
</dbReference>
<dbReference type="GO" id="GO:0005829">
    <property type="term" value="C:cytosol"/>
    <property type="evidence" value="ECO:0007669"/>
    <property type="project" value="TreeGrafter"/>
</dbReference>
<dbReference type="GO" id="GO:0050660">
    <property type="term" value="F:flavin adenine dinucleotide binding"/>
    <property type="evidence" value="ECO:0007669"/>
    <property type="project" value="InterPro"/>
</dbReference>
<dbReference type="GO" id="GO:0050131">
    <property type="term" value="F:N-methyl-L-amino-acid oxidase activity"/>
    <property type="evidence" value="ECO:0007669"/>
    <property type="project" value="InterPro"/>
</dbReference>
<dbReference type="GO" id="GO:0008115">
    <property type="term" value="F:sarcosine oxidase activity"/>
    <property type="evidence" value="ECO:0007669"/>
    <property type="project" value="TreeGrafter"/>
</dbReference>
<dbReference type="Gene3D" id="3.30.9.10">
    <property type="entry name" value="D-Amino Acid Oxidase, subunit A, domain 2"/>
    <property type="match status" value="1"/>
</dbReference>
<dbReference type="Gene3D" id="3.50.50.60">
    <property type="entry name" value="FAD/NAD(P)-binding domain"/>
    <property type="match status" value="1"/>
</dbReference>
<dbReference type="HAMAP" id="MF_00515">
    <property type="entry name" value="MTOX"/>
    <property type="match status" value="1"/>
</dbReference>
<dbReference type="InterPro" id="IPR006076">
    <property type="entry name" value="FAD-dep_OxRdtase"/>
</dbReference>
<dbReference type="InterPro" id="IPR036188">
    <property type="entry name" value="FAD/NAD-bd_sf"/>
</dbReference>
<dbReference type="InterPro" id="IPR023493">
    <property type="entry name" value="Me_Trp_Oxase_MTOX"/>
</dbReference>
<dbReference type="InterPro" id="IPR045170">
    <property type="entry name" value="MTOX"/>
</dbReference>
<dbReference type="NCBIfam" id="NF008425">
    <property type="entry name" value="PRK11259.1"/>
    <property type="match status" value="1"/>
</dbReference>
<dbReference type="PANTHER" id="PTHR10961:SF7">
    <property type="entry name" value="FAD DEPENDENT OXIDOREDUCTASE DOMAIN-CONTAINING PROTEIN"/>
    <property type="match status" value="1"/>
</dbReference>
<dbReference type="PANTHER" id="PTHR10961">
    <property type="entry name" value="PEROXISOMAL SARCOSINE OXIDASE"/>
    <property type="match status" value="1"/>
</dbReference>
<dbReference type="Pfam" id="PF01266">
    <property type="entry name" value="DAO"/>
    <property type="match status" value="1"/>
</dbReference>
<dbReference type="SUPFAM" id="SSF54373">
    <property type="entry name" value="FAD-linked reductases, C-terminal domain"/>
    <property type="match status" value="1"/>
</dbReference>
<dbReference type="SUPFAM" id="SSF51905">
    <property type="entry name" value="FAD/NAD(P)-binding domain"/>
    <property type="match status" value="1"/>
</dbReference>
<feature type="chain" id="PRO_1000127447" description="N-methyl-L-tryptophan oxidase">
    <location>
        <begin position="1"/>
        <end position="372"/>
    </location>
</feature>
<feature type="binding site" evidence="1">
    <location>
        <begin position="4"/>
        <end position="34"/>
    </location>
    <ligand>
        <name>FAD</name>
        <dbReference type="ChEBI" id="CHEBI:57692"/>
    </ligand>
</feature>
<feature type="modified residue" description="S-8alpha-FAD cysteine" evidence="1">
    <location>
        <position position="307"/>
    </location>
</feature>
<sequence length="372" mass="40722">MKYDLIIIGSGSVGAAAGYYATRAGLKVLMTDAHMPPHQQGSHHGDTRLIRHAYGEGEKYVPLVLRAQTLWDELSTHNEEPIFVRSGVVNLGPADSAFLANVARSAQQWQLNVERLDATALMTRWPEIRVPDNYIGLFEADSGFLRSELAITTWLRLAREAGCAQLFNSPVSHIHHDDNGVTIETSEGSYHASKALISAGTWVKALVPELPVQPVRKVFAWFKADGRYSTKNRFPAFTGEMPNGDQYYGFPAENDELKIGKHNGGQRIQAQEERKPFAAVASDGAEAFPFLRNVLPGIGGCLHGAACTYDNSPDEDFIIDTLPGHENTLVITGLSGHGFKFAPVLGEIAADFALGKTPSFDLTPFRLSRFSQ</sequence>